<feature type="chain" id="PRO_1000100540" description="Adenylate kinase">
    <location>
        <begin position="1"/>
        <end position="221"/>
    </location>
</feature>
<feature type="region of interest" description="NMP" evidence="1">
    <location>
        <begin position="30"/>
        <end position="59"/>
    </location>
</feature>
<feature type="region of interest" description="LID" evidence="1">
    <location>
        <begin position="122"/>
        <end position="159"/>
    </location>
</feature>
<feature type="binding site" evidence="1">
    <location>
        <begin position="10"/>
        <end position="15"/>
    </location>
    <ligand>
        <name>ATP</name>
        <dbReference type="ChEBI" id="CHEBI:30616"/>
    </ligand>
</feature>
<feature type="binding site" evidence="1">
    <location>
        <position position="31"/>
    </location>
    <ligand>
        <name>AMP</name>
        <dbReference type="ChEBI" id="CHEBI:456215"/>
    </ligand>
</feature>
<feature type="binding site" evidence="1">
    <location>
        <position position="36"/>
    </location>
    <ligand>
        <name>AMP</name>
        <dbReference type="ChEBI" id="CHEBI:456215"/>
    </ligand>
</feature>
<feature type="binding site" evidence="1">
    <location>
        <begin position="57"/>
        <end position="59"/>
    </location>
    <ligand>
        <name>AMP</name>
        <dbReference type="ChEBI" id="CHEBI:456215"/>
    </ligand>
</feature>
<feature type="binding site" evidence="1">
    <location>
        <begin position="85"/>
        <end position="88"/>
    </location>
    <ligand>
        <name>AMP</name>
        <dbReference type="ChEBI" id="CHEBI:456215"/>
    </ligand>
</feature>
<feature type="binding site" evidence="1">
    <location>
        <position position="92"/>
    </location>
    <ligand>
        <name>AMP</name>
        <dbReference type="ChEBI" id="CHEBI:456215"/>
    </ligand>
</feature>
<feature type="binding site" evidence="1">
    <location>
        <position position="123"/>
    </location>
    <ligand>
        <name>ATP</name>
        <dbReference type="ChEBI" id="CHEBI:30616"/>
    </ligand>
</feature>
<feature type="binding site" evidence="1">
    <location>
        <begin position="132"/>
        <end position="133"/>
    </location>
    <ligand>
        <name>ATP</name>
        <dbReference type="ChEBI" id="CHEBI:30616"/>
    </ligand>
</feature>
<feature type="binding site" evidence="1">
    <location>
        <position position="156"/>
    </location>
    <ligand>
        <name>AMP</name>
        <dbReference type="ChEBI" id="CHEBI:456215"/>
    </ligand>
</feature>
<feature type="binding site" evidence="1">
    <location>
        <position position="167"/>
    </location>
    <ligand>
        <name>AMP</name>
        <dbReference type="ChEBI" id="CHEBI:456215"/>
    </ligand>
</feature>
<feature type="binding site" evidence="1">
    <location>
        <position position="207"/>
    </location>
    <ligand>
        <name>ATP</name>
        <dbReference type="ChEBI" id="CHEBI:30616"/>
    </ligand>
</feature>
<proteinExistence type="inferred from homology"/>
<keyword id="KW-0067">ATP-binding</keyword>
<keyword id="KW-0963">Cytoplasm</keyword>
<keyword id="KW-0418">Kinase</keyword>
<keyword id="KW-0545">Nucleotide biosynthesis</keyword>
<keyword id="KW-0547">Nucleotide-binding</keyword>
<keyword id="KW-0808">Transferase</keyword>
<name>KAD_PARPJ</name>
<accession>B2T6M4</accession>
<gene>
    <name evidence="1" type="primary">adk</name>
    <name type="ordered locus">Bphyt_3199</name>
</gene>
<organism>
    <name type="scientific">Paraburkholderia phytofirmans (strain DSM 17436 / LMG 22146 / PsJN)</name>
    <name type="common">Burkholderia phytofirmans</name>
    <dbReference type="NCBI Taxonomy" id="398527"/>
    <lineage>
        <taxon>Bacteria</taxon>
        <taxon>Pseudomonadati</taxon>
        <taxon>Pseudomonadota</taxon>
        <taxon>Betaproteobacteria</taxon>
        <taxon>Burkholderiales</taxon>
        <taxon>Burkholderiaceae</taxon>
        <taxon>Paraburkholderia</taxon>
    </lineage>
</organism>
<comment type="function">
    <text evidence="1">Catalyzes the reversible transfer of the terminal phosphate group between ATP and AMP. Plays an important role in cellular energy homeostasis and in adenine nucleotide metabolism.</text>
</comment>
<comment type="catalytic activity">
    <reaction evidence="1">
        <text>AMP + ATP = 2 ADP</text>
        <dbReference type="Rhea" id="RHEA:12973"/>
        <dbReference type="ChEBI" id="CHEBI:30616"/>
        <dbReference type="ChEBI" id="CHEBI:456215"/>
        <dbReference type="ChEBI" id="CHEBI:456216"/>
        <dbReference type="EC" id="2.7.4.3"/>
    </reaction>
</comment>
<comment type="pathway">
    <text evidence="1">Purine metabolism; AMP biosynthesis via salvage pathway; AMP from ADP: step 1/1.</text>
</comment>
<comment type="subunit">
    <text evidence="1">Monomer.</text>
</comment>
<comment type="subcellular location">
    <subcellularLocation>
        <location evidence="1">Cytoplasm</location>
    </subcellularLocation>
</comment>
<comment type="domain">
    <text evidence="1">Consists of three domains, a large central CORE domain and two small peripheral domains, NMPbind and LID, which undergo movements during catalysis. The LID domain closes over the site of phosphoryl transfer upon ATP binding. Assembling and dissambling the active center during each catalytic cycle provides an effective means to prevent ATP hydrolysis.</text>
</comment>
<comment type="similarity">
    <text evidence="1">Belongs to the adenylate kinase family.</text>
</comment>
<dbReference type="EC" id="2.7.4.3" evidence="1"/>
<dbReference type="EMBL" id="CP001052">
    <property type="protein sequence ID" value="ACD17591.1"/>
    <property type="molecule type" value="Genomic_DNA"/>
</dbReference>
<dbReference type="RefSeq" id="WP_012434161.1">
    <property type="nucleotide sequence ID" value="NC_010681.1"/>
</dbReference>
<dbReference type="SMR" id="B2T6M4"/>
<dbReference type="STRING" id="398527.Bphyt_3199"/>
<dbReference type="KEGG" id="bpy:Bphyt_3199"/>
<dbReference type="eggNOG" id="COG0563">
    <property type="taxonomic scope" value="Bacteria"/>
</dbReference>
<dbReference type="HOGENOM" id="CLU_032354_1_2_4"/>
<dbReference type="OrthoDB" id="9805030at2"/>
<dbReference type="UniPathway" id="UPA00588">
    <property type="reaction ID" value="UER00649"/>
</dbReference>
<dbReference type="Proteomes" id="UP000001739">
    <property type="component" value="Chromosome 1"/>
</dbReference>
<dbReference type="GO" id="GO:0005737">
    <property type="term" value="C:cytoplasm"/>
    <property type="evidence" value="ECO:0007669"/>
    <property type="project" value="UniProtKB-SubCell"/>
</dbReference>
<dbReference type="GO" id="GO:0004017">
    <property type="term" value="F:adenylate kinase activity"/>
    <property type="evidence" value="ECO:0007669"/>
    <property type="project" value="UniProtKB-UniRule"/>
</dbReference>
<dbReference type="GO" id="GO:0005524">
    <property type="term" value="F:ATP binding"/>
    <property type="evidence" value="ECO:0007669"/>
    <property type="project" value="UniProtKB-UniRule"/>
</dbReference>
<dbReference type="GO" id="GO:0044209">
    <property type="term" value="P:AMP salvage"/>
    <property type="evidence" value="ECO:0007669"/>
    <property type="project" value="UniProtKB-UniRule"/>
</dbReference>
<dbReference type="CDD" id="cd01428">
    <property type="entry name" value="ADK"/>
    <property type="match status" value="1"/>
</dbReference>
<dbReference type="FunFam" id="3.40.50.300:FF:000106">
    <property type="entry name" value="Adenylate kinase mitochondrial"/>
    <property type="match status" value="1"/>
</dbReference>
<dbReference type="Gene3D" id="3.40.50.300">
    <property type="entry name" value="P-loop containing nucleotide triphosphate hydrolases"/>
    <property type="match status" value="1"/>
</dbReference>
<dbReference type="HAMAP" id="MF_00235">
    <property type="entry name" value="Adenylate_kinase_Adk"/>
    <property type="match status" value="1"/>
</dbReference>
<dbReference type="InterPro" id="IPR006259">
    <property type="entry name" value="Adenyl_kin_sub"/>
</dbReference>
<dbReference type="InterPro" id="IPR000850">
    <property type="entry name" value="Adenylat/UMP-CMP_kin"/>
</dbReference>
<dbReference type="InterPro" id="IPR033690">
    <property type="entry name" value="Adenylat_kinase_CS"/>
</dbReference>
<dbReference type="InterPro" id="IPR007862">
    <property type="entry name" value="Adenylate_kinase_lid-dom"/>
</dbReference>
<dbReference type="InterPro" id="IPR027417">
    <property type="entry name" value="P-loop_NTPase"/>
</dbReference>
<dbReference type="NCBIfam" id="TIGR01351">
    <property type="entry name" value="adk"/>
    <property type="match status" value="1"/>
</dbReference>
<dbReference type="NCBIfam" id="NF001379">
    <property type="entry name" value="PRK00279.1-1"/>
    <property type="match status" value="1"/>
</dbReference>
<dbReference type="NCBIfam" id="NF001380">
    <property type="entry name" value="PRK00279.1-2"/>
    <property type="match status" value="1"/>
</dbReference>
<dbReference type="NCBIfam" id="NF001381">
    <property type="entry name" value="PRK00279.1-3"/>
    <property type="match status" value="1"/>
</dbReference>
<dbReference type="NCBIfam" id="NF011100">
    <property type="entry name" value="PRK14527.1"/>
    <property type="match status" value="1"/>
</dbReference>
<dbReference type="PANTHER" id="PTHR23359">
    <property type="entry name" value="NUCLEOTIDE KINASE"/>
    <property type="match status" value="1"/>
</dbReference>
<dbReference type="Pfam" id="PF00406">
    <property type="entry name" value="ADK"/>
    <property type="match status" value="1"/>
</dbReference>
<dbReference type="Pfam" id="PF05191">
    <property type="entry name" value="ADK_lid"/>
    <property type="match status" value="1"/>
</dbReference>
<dbReference type="PRINTS" id="PR00094">
    <property type="entry name" value="ADENYLTKNASE"/>
</dbReference>
<dbReference type="SUPFAM" id="SSF52540">
    <property type="entry name" value="P-loop containing nucleoside triphosphate hydrolases"/>
    <property type="match status" value="1"/>
</dbReference>
<dbReference type="PROSITE" id="PS00113">
    <property type="entry name" value="ADENYLATE_KINASE"/>
    <property type="match status" value="1"/>
</dbReference>
<reference key="1">
    <citation type="journal article" date="2011" name="J. Bacteriol.">
        <title>Complete genome sequence of the plant growth-promoting endophyte Burkholderia phytofirmans strain PsJN.</title>
        <authorList>
            <person name="Weilharter A."/>
            <person name="Mitter B."/>
            <person name="Shin M.V."/>
            <person name="Chain P.S."/>
            <person name="Nowak J."/>
            <person name="Sessitsch A."/>
        </authorList>
    </citation>
    <scope>NUCLEOTIDE SEQUENCE [LARGE SCALE GENOMIC DNA]</scope>
    <source>
        <strain>DSM 17436 / LMG 22146 / PsJN</strain>
    </source>
</reference>
<protein>
    <recommendedName>
        <fullName evidence="1">Adenylate kinase</fullName>
        <shortName evidence="1">AK</shortName>
        <ecNumber evidence="1">2.7.4.3</ecNumber>
    </recommendedName>
    <alternativeName>
        <fullName evidence="1">ATP-AMP transphosphorylase</fullName>
    </alternativeName>
    <alternativeName>
        <fullName evidence="1">ATP:AMP phosphotransferase</fullName>
    </alternativeName>
    <alternativeName>
        <fullName evidence="1">Adenylate monophosphate kinase</fullName>
    </alternativeName>
</protein>
<evidence type="ECO:0000255" key="1">
    <source>
        <dbReference type="HAMAP-Rule" id="MF_00235"/>
    </source>
</evidence>
<sequence length="221" mass="24569">MRLILLGAPGAGKGTQANFIKEKFGIPQISTGDMLRAAVKAGTPLGLEAKRFMDAGELVTDELIINLVKERLQQPDCANGYLFDGFPRTIPQAEAMKQAGVPIDYVLEIDVPFDEIILRMSGRRSHAASGRTYHVKFNPPKVEGVDDMTGEPLIQRDDDKEETVKKRLEVYEAQTKPLIEYYNTWAKNGDSSTPLTAPQYRRISGLGSVDEIRDRAFEALK</sequence>